<reference key="1">
    <citation type="journal article" date="2001" name="Proc. Natl. Acad. Sci. U.S.A.">
        <title>Analysis of the chromosome sequence of the legume symbiont Sinorhizobium meliloti strain 1021.</title>
        <authorList>
            <person name="Capela D."/>
            <person name="Barloy-Hubler F."/>
            <person name="Gouzy J."/>
            <person name="Bothe G."/>
            <person name="Ampe F."/>
            <person name="Batut J."/>
            <person name="Boistard P."/>
            <person name="Becker A."/>
            <person name="Boutry M."/>
            <person name="Cadieu E."/>
            <person name="Dreano S."/>
            <person name="Gloux S."/>
            <person name="Godrie T."/>
            <person name="Goffeau A."/>
            <person name="Kahn D."/>
            <person name="Kiss E."/>
            <person name="Lelaure V."/>
            <person name="Masuy D."/>
            <person name="Pohl T."/>
            <person name="Portetelle D."/>
            <person name="Puehler A."/>
            <person name="Purnelle B."/>
            <person name="Ramsperger U."/>
            <person name="Renard C."/>
            <person name="Thebault P."/>
            <person name="Vandenbol M."/>
            <person name="Weidner S."/>
            <person name="Galibert F."/>
        </authorList>
    </citation>
    <scope>NUCLEOTIDE SEQUENCE [LARGE SCALE GENOMIC DNA]</scope>
    <source>
        <strain>1021</strain>
    </source>
</reference>
<reference key="2">
    <citation type="journal article" date="2001" name="Science">
        <title>The composite genome of the legume symbiont Sinorhizobium meliloti.</title>
        <authorList>
            <person name="Galibert F."/>
            <person name="Finan T.M."/>
            <person name="Long S.R."/>
            <person name="Puehler A."/>
            <person name="Abola P."/>
            <person name="Ampe F."/>
            <person name="Barloy-Hubler F."/>
            <person name="Barnett M.J."/>
            <person name="Becker A."/>
            <person name="Boistard P."/>
            <person name="Bothe G."/>
            <person name="Boutry M."/>
            <person name="Bowser L."/>
            <person name="Buhrmester J."/>
            <person name="Cadieu E."/>
            <person name="Capela D."/>
            <person name="Chain P."/>
            <person name="Cowie A."/>
            <person name="Davis R.W."/>
            <person name="Dreano S."/>
            <person name="Federspiel N.A."/>
            <person name="Fisher R.F."/>
            <person name="Gloux S."/>
            <person name="Godrie T."/>
            <person name="Goffeau A."/>
            <person name="Golding B."/>
            <person name="Gouzy J."/>
            <person name="Gurjal M."/>
            <person name="Hernandez-Lucas I."/>
            <person name="Hong A."/>
            <person name="Huizar L."/>
            <person name="Hyman R.W."/>
            <person name="Jones T."/>
            <person name="Kahn D."/>
            <person name="Kahn M.L."/>
            <person name="Kalman S."/>
            <person name="Keating D.H."/>
            <person name="Kiss E."/>
            <person name="Komp C."/>
            <person name="Lelaure V."/>
            <person name="Masuy D."/>
            <person name="Palm C."/>
            <person name="Peck M.C."/>
            <person name="Pohl T.M."/>
            <person name="Portetelle D."/>
            <person name="Purnelle B."/>
            <person name="Ramsperger U."/>
            <person name="Surzycki R."/>
            <person name="Thebault P."/>
            <person name="Vandenbol M."/>
            <person name="Vorhoelter F.J."/>
            <person name="Weidner S."/>
            <person name="Wells D.H."/>
            <person name="Wong K."/>
            <person name="Yeh K.-C."/>
            <person name="Batut J."/>
        </authorList>
    </citation>
    <scope>NUCLEOTIDE SEQUENCE [LARGE SCALE GENOMIC DNA]</scope>
    <source>
        <strain>1021</strain>
    </source>
</reference>
<proteinExistence type="inferred from homology"/>
<name>DEF_RHIME</name>
<dbReference type="EC" id="3.5.1.88" evidence="1"/>
<dbReference type="EMBL" id="AL591688">
    <property type="protein sequence ID" value="CAC41856.1"/>
    <property type="status" value="ALT_INIT"/>
    <property type="molecule type" value="Genomic_DNA"/>
</dbReference>
<dbReference type="RefSeq" id="NP_384525.1">
    <property type="nucleotide sequence ID" value="NC_003047.1"/>
</dbReference>
<dbReference type="RefSeq" id="WP_003527648.1">
    <property type="nucleotide sequence ID" value="NC_003047.1"/>
</dbReference>
<dbReference type="SMR" id="Q92SH6"/>
<dbReference type="EnsemblBacteria" id="CAC41856">
    <property type="protein sequence ID" value="CAC41856"/>
    <property type="gene ID" value="SMc01101"/>
</dbReference>
<dbReference type="GeneID" id="89574748"/>
<dbReference type="KEGG" id="sme:SMc01101"/>
<dbReference type="PATRIC" id="fig|266834.11.peg.1792"/>
<dbReference type="eggNOG" id="COG0242">
    <property type="taxonomic scope" value="Bacteria"/>
</dbReference>
<dbReference type="HOGENOM" id="CLU_061901_2_0_5"/>
<dbReference type="OrthoDB" id="9804313at2"/>
<dbReference type="Proteomes" id="UP000001976">
    <property type="component" value="Chromosome"/>
</dbReference>
<dbReference type="GO" id="GO:0046872">
    <property type="term" value="F:metal ion binding"/>
    <property type="evidence" value="ECO:0007669"/>
    <property type="project" value="UniProtKB-KW"/>
</dbReference>
<dbReference type="GO" id="GO:0042586">
    <property type="term" value="F:peptide deformylase activity"/>
    <property type="evidence" value="ECO:0007669"/>
    <property type="project" value="UniProtKB-UniRule"/>
</dbReference>
<dbReference type="GO" id="GO:0043686">
    <property type="term" value="P:co-translational protein modification"/>
    <property type="evidence" value="ECO:0007669"/>
    <property type="project" value="TreeGrafter"/>
</dbReference>
<dbReference type="GO" id="GO:0006412">
    <property type="term" value="P:translation"/>
    <property type="evidence" value="ECO:0007669"/>
    <property type="project" value="UniProtKB-UniRule"/>
</dbReference>
<dbReference type="CDD" id="cd00487">
    <property type="entry name" value="Pep_deformylase"/>
    <property type="match status" value="1"/>
</dbReference>
<dbReference type="FunFam" id="3.90.45.10:FF:000005">
    <property type="entry name" value="Peptide deformylase"/>
    <property type="match status" value="1"/>
</dbReference>
<dbReference type="Gene3D" id="3.90.45.10">
    <property type="entry name" value="Peptide deformylase"/>
    <property type="match status" value="1"/>
</dbReference>
<dbReference type="HAMAP" id="MF_00163">
    <property type="entry name" value="Pep_deformylase"/>
    <property type="match status" value="1"/>
</dbReference>
<dbReference type="InterPro" id="IPR023635">
    <property type="entry name" value="Peptide_deformylase"/>
</dbReference>
<dbReference type="InterPro" id="IPR036821">
    <property type="entry name" value="Peptide_deformylase_sf"/>
</dbReference>
<dbReference type="NCBIfam" id="TIGR00079">
    <property type="entry name" value="pept_deformyl"/>
    <property type="match status" value="1"/>
</dbReference>
<dbReference type="NCBIfam" id="NF001159">
    <property type="entry name" value="PRK00150.1-3"/>
    <property type="match status" value="1"/>
</dbReference>
<dbReference type="PANTHER" id="PTHR10458">
    <property type="entry name" value="PEPTIDE DEFORMYLASE"/>
    <property type="match status" value="1"/>
</dbReference>
<dbReference type="PANTHER" id="PTHR10458:SF22">
    <property type="entry name" value="PEPTIDE DEFORMYLASE"/>
    <property type="match status" value="1"/>
</dbReference>
<dbReference type="Pfam" id="PF01327">
    <property type="entry name" value="Pep_deformylase"/>
    <property type="match status" value="1"/>
</dbReference>
<dbReference type="PIRSF" id="PIRSF004749">
    <property type="entry name" value="Pep_def"/>
    <property type="match status" value="1"/>
</dbReference>
<dbReference type="PRINTS" id="PR01576">
    <property type="entry name" value="PDEFORMYLASE"/>
</dbReference>
<dbReference type="SUPFAM" id="SSF56420">
    <property type="entry name" value="Peptide deformylase"/>
    <property type="match status" value="1"/>
</dbReference>
<organism>
    <name type="scientific">Rhizobium meliloti (strain 1021)</name>
    <name type="common">Ensifer meliloti</name>
    <name type="synonym">Sinorhizobium meliloti</name>
    <dbReference type="NCBI Taxonomy" id="266834"/>
    <lineage>
        <taxon>Bacteria</taxon>
        <taxon>Pseudomonadati</taxon>
        <taxon>Pseudomonadota</taxon>
        <taxon>Alphaproteobacteria</taxon>
        <taxon>Hyphomicrobiales</taxon>
        <taxon>Rhizobiaceae</taxon>
        <taxon>Sinorhizobium/Ensifer group</taxon>
        <taxon>Sinorhizobium</taxon>
    </lineage>
</organism>
<accession>Q92SH6</accession>
<feature type="chain" id="PRO_0000082827" description="Peptide deformylase">
    <location>
        <begin position="1"/>
        <end position="174"/>
    </location>
</feature>
<feature type="active site" evidence="1">
    <location>
        <position position="137"/>
    </location>
</feature>
<feature type="binding site" evidence="1">
    <location>
        <position position="94"/>
    </location>
    <ligand>
        <name>Fe cation</name>
        <dbReference type="ChEBI" id="CHEBI:24875"/>
    </ligand>
</feature>
<feature type="binding site" evidence="1">
    <location>
        <position position="136"/>
    </location>
    <ligand>
        <name>Fe cation</name>
        <dbReference type="ChEBI" id="CHEBI:24875"/>
    </ligand>
</feature>
<feature type="binding site" evidence="1">
    <location>
        <position position="140"/>
    </location>
    <ligand>
        <name>Fe cation</name>
        <dbReference type="ChEBI" id="CHEBI:24875"/>
    </ligand>
</feature>
<keyword id="KW-0378">Hydrolase</keyword>
<keyword id="KW-0408">Iron</keyword>
<keyword id="KW-0479">Metal-binding</keyword>
<keyword id="KW-0648">Protein biosynthesis</keyword>
<keyword id="KW-1185">Reference proteome</keyword>
<gene>
    <name evidence="1" type="primary">def</name>
    <name type="ordered locus">R00419</name>
    <name type="ORF">SMc01101</name>
</gene>
<sequence length="174" mass="19477">MTIKPLIILPDPVLRQVSTPVETIDADIRRLADDMLETMYDAPGIGLAAIQIGVPKRLLVLDVTKEGEEKQPLVFINPKVVRSSEERSVYEEGCLSIPDYYAEVERPAAITVEYVDREGKEQAVEAEGLLATCLQHEIDHLNGVLFIDYISKLKRDMVIRRFTKAAKTRGAKAI</sequence>
<comment type="function">
    <text evidence="1">Removes the formyl group from the N-terminal Met of newly synthesized proteins. Requires at least a dipeptide for an efficient rate of reaction. N-terminal L-methionine is a prerequisite for activity but the enzyme has broad specificity at other positions.</text>
</comment>
<comment type="catalytic activity">
    <reaction evidence="1">
        <text>N-terminal N-formyl-L-methionyl-[peptide] + H2O = N-terminal L-methionyl-[peptide] + formate</text>
        <dbReference type="Rhea" id="RHEA:24420"/>
        <dbReference type="Rhea" id="RHEA-COMP:10639"/>
        <dbReference type="Rhea" id="RHEA-COMP:10640"/>
        <dbReference type="ChEBI" id="CHEBI:15377"/>
        <dbReference type="ChEBI" id="CHEBI:15740"/>
        <dbReference type="ChEBI" id="CHEBI:49298"/>
        <dbReference type="ChEBI" id="CHEBI:64731"/>
        <dbReference type="EC" id="3.5.1.88"/>
    </reaction>
</comment>
<comment type="cofactor">
    <cofactor evidence="1">
        <name>Fe(2+)</name>
        <dbReference type="ChEBI" id="CHEBI:29033"/>
    </cofactor>
    <text evidence="1">Binds 1 Fe(2+) ion.</text>
</comment>
<comment type="similarity">
    <text evidence="1">Belongs to the polypeptide deformylase family.</text>
</comment>
<comment type="sequence caution" evidence="2">
    <conflict type="erroneous initiation">
        <sequence resource="EMBL-CDS" id="CAC41856"/>
    </conflict>
</comment>
<protein>
    <recommendedName>
        <fullName evidence="1">Peptide deformylase</fullName>
        <shortName evidence="1">PDF</shortName>
        <ecNumber evidence="1">3.5.1.88</ecNumber>
    </recommendedName>
    <alternativeName>
        <fullName evidence="1">Polypeptide deformylase</fullName>
    </alternativeName>
</protein>
<evidence type="ECO:0000255" key="1">
    <source>
        <dbReference type="HAMAP-Rule" id="MF_00163"/>
    </source>
</evidence>
<evidence type="ECO:0000305" key="2"/>